<keyword id="KW-0249">Electron transport</keyword>
<keyword id="KW-0274">FAD</keyword>
<keyword id="KW-0285">Flavoprotein</keyword>
<keyword id="KW-0496">Mitochondrion</keyword>
<keyword id="KW-0597">Phosphoprotein</keyword>
<keyword id="KW-1185">Reference proteome</keyword>
<keyword id="KW-0679">Respiratory chain</keyword>
<keyword id="KW-0809">Transit peptide</keyword>
<keyword id="KW-0813">Transport</keyword>
<protein>
    <recommendedName>
        <fullName>NADH dehydrogenase [ubiquinone] 1 alpha subcomplex subunit 10, mitochondrial</fullName>
    </recommendedName>
    <alternativeName>
        <fullName>Complex I-42kD</fullName>
        <shortName>CI-42kD</shortName>
    </alternativeName>
    <alternativeName>
        <fullName>NADH-ubiquinone oxidoreductase 42 kDa subunit</fullName>
    </alternativeName>
</protein>
<comment type="function">
    <text evidence="2">Accessory subunit of the mitochondrial membrane respiratory chain NADH dehydrogenase (Complex I), that is believed not to be involved in catalysis. Complex I functions in the transfer of electrons from NADH to the respiratory chain. The immediate electron acceptor for the enzyme is believed to be ubiquinone.</text>
</comment>
<comment type="cofactor">
    <cofactor evidence="1">
        <name>FAD</name>
        <dbReference type="ChEBI" id="CHEBI:57692"/>
    </cofactor>
    <text evidence="1">Binds 1 FAD per subunit.</text>
</comment>
<comment type="subunit">
    <text evidence="2">Complex I is composed of 45 different subunits. This a component of the hydrophobic protein fraction.</text>
</comment>
<comment type="subcellular location">
    <subcellularLocation>
        <location evidence="2">Mitochondrion matrix</location>
    </subcellularLocation>
</comment>
<comment type="PTM">
    <text evidence="4">Phosphorylation at Ser-250 by PINK1 is required for the binding and/or reduction of the complex I substrate ubiquinone.</text>
</comment>
<comment type="similarity">
    <text evidence="5">Belongs to the complex I NDUFA10 subunit family.</text>
</comment>
<name>NDUAA_PONAB</name>
<accession>P0CB89</accession>
<accession>Q0MQB5</accession>
<accession>Q5R9E8</accession>
<feature type="transit peptide" description="Mitochondrion" evidence="3">
    <location>
        <begin position="1"/>
        <end position="35"/>
    </location>
</feature>
<feature type="chain" id="PRO_0000234302" description="NADH dehydrogenase [ubiquinone] 1 alpha subcomplex subunit 10, mitochondrial">
    <location>
        <begin position="36"/>
        <end position="355"/>
    </location>
</feature>
<feature type="modified residue" description="Phosphoserine; by PINK1" evidence="4">
    <location>
        <position position="250"/>
    </location>
</feature>
<feature type="modified residue" description="N6-succinyllysine" evidence="4">
    <location>
        <position position="285"/>
    </location>
</feature>
<gene>
    <name type="primary">NDUFA10</name>
</gene>
<reference key="1">
    <citation type="submission" date="2004-11" db="EMBL/GenBank/DDBJ databases">
        <authorList>
            <consortium name="The German cDNA consortium"/>
        </authorList>
    </citation>
    <scope>NUCLEOTIDE SEQUENCE [LARGE SCALE MRNA]</scope>
    <source>
        <tissue>Heart</tissue>
    </source>
</reference>
<proteinExistence type="evidence at transcript level"/>
<evidence type="ECO:0000250" key="1"/>
<evidence type="ECO:0000250" key="2">
    <source>
        <dbReference type="UniProtKB" id="O95299"/>
    </source>
</evidence>
<evidence type="ECO:0000250" key="3">
    <source>
        <dbReference type="UniProtKB" id="P34942"/>
    </source>
</evidence>
<evidence type="ECO:0000250" key="4">
    <source>
        <dbReference type="UniProtKB" id="Q99LC3"/>
    </source>
</evidence>
<evidence type="ECO:0000305" key="5"/>
<sequence>MALRLLKLAPASASARVVAAGAQRVRGIHSSVQCKLRYGMWRFLLGDKASKRLTERSRVITVDGNICTGKGKLAKEIAEKLGFKHFPEAGIHYPDSITGDGKPLAADYNGNCSLEKFYDDPRSNDGNTYRLQSWLYSSRLLQYSDALEHLLTTGQGVVLERSIFSDFVFLDAMYNQGFIRKQCVDHYNEVKSVTICDYLPPHLVIYIDVPVPEVQRRIQKKGDPHEMKITSAYLQDIENAYKKTFLPEMSEKCEVLQYSAREAQDSKKVVEDIEYLKFDKGPWLKQDNHTLYHLRLLVQDKFEVLNYTSIPVFLPEVTIGAHQTDRVLHQFRELPGRKYSPGYNTEVGDKWIWLK</sequence>
<dbReference type="EMBL" id="CR859441">
    <property type="protein sequence ID" value="CAH91612.1"/>
    <property type="molecule type" value="mRNA"/>
</dbReference>
<dbReference type="SMR" id="P0CB89"/>
<dbReference type="FunCoup" id="P0CB89">
    <property type="interactions" value="1830"/>
</dbReference>
<dbReference type="STRING" id="9601.ENSPPYP00000014913"/>
<dbReference type="eggNOG" id="KOG3877">
    <property type="taxonomic scope" value="Eukaryota"/>
</dbReference>
<dbReference type="InParanoid" id="P0CB89"/>
<dbReference type="Proteomes" id="UP000001595">
    <property type="component" value="Unplaced"/>
</dbReference>
<dbReference type="GO" id="GO:0005759">
    <property type="term" value="C:mitochondrial matrix"/>
    <property type="evidence" value="ECO:0007669"/>
    <property type="project" value="UniProtKB-SubCell"/>
</dbReference>
<dbReference type="GO" id="GO:0045271">
    <property type="term" value="C:respiratory chain complex I"/>
    <property type="evidence" value="ECO:0000250"/>
    <property type="project" value="UniProtKB"/>
</dbReference>
<dbReference type="GO" id="GO:0006120">
    <property type="term" value="P:mitochondrial electron transport, NADH to ubiquinone"/>
    <property type="evidence" value="ECO:0007669"/>
    <property type="project" value="InterPro"/>
</dbReference>
<dbReference type="CDD" id="cd02030">
    <property type="entry name" value="NDUO42"/>
    <property type="match status" value="1"/>
</dbReference>
<dbReference type="FunFam" id="3.40.50.300:FF:000837">
    <property type="entry name" value="NADH dehydrogenase [ubiquinone] 1 alpha subcomplex subunit 10, mitochondrial"/>
    <property type="match status" value="1"/>
</dbReference>
<dbReference type="Gene3D" id="3.40.50.300">
    <property type="entry name" value="P-loop containing nucleotide triphosphate hydrolases"/>
    <property type="match status" value="1"/>
</dbReference>
<dbReference type="InterPro" id="IPR050566">
    <property type="entry name" value="Deoxyribonucleoside_kinase"/>
</dbReference>
<dbReference type="InterPro" id="IPR031314">
    <property type="entry name" value="DNK_dom"/>
</dbReference>
<dbReference type="InterPro" id="IPR015828">
    <property type="entry name" value="NDUFA10"/>
</dbReference>
<dbReference type="InterPro" id="IPR027417">
    <property type="entry name" value="P-loop_NTPase"/>
</dbReference>
<dbReference type="PANTHER" id="PTHR10513">
    <property type="entry name" value="DEOXYNUCLEOSIDE KINASE"/>
    <property type="match status" value="1"/>
</dbReference>
<dbReference type="PANTHER" id="PTHR10513:SF15">
    <property type="entry name" value="NADH DEHYDROGENASE [UBIQUINONE] 1 ALPHA SUBCOMPLEX SUBUNIT 10, MITOCHONDRIAL"/>
    <property type="match status" value="1"/>
</dbReference>
<dbReference type="Pfam" id="PF01712">
    <property type="entry name" value="dNK"/>
    <property type="match status" value="1"/>
</dbReference>
<dbReference type="PIRSF" id="PIRSF000543">
    <property type="entry name" value="NADH_UQ_42KD"/>
    <property type="match status" value="1"/>
</dbReference>
<dbReference type="SUPFAM" id="SSF52540">
    <property type="entry name" value="P-loop containing nucleoside triphosphate hydrolases"/>
    <property type="match status" value="1"/>
</dbReference>
<organism>
    <name type="scientific">Pongo abelii</name>
    <name type="common">Sumatran orangutan</name>
    <name type="synonym">Pongo pygmaeus abelii</name>
    <dbReference type="NCBI Taxonomy" id="9601"/>
    <lineage>
        <taxon>Eukaryota</taxon>
        <taxon>Metazoa</taxon>
        <taxon>Chordata</taxon>
        <taxon>Craniata</taxon>
        <taxon>Vertebrata</taxon>
        <taxon>Euteleostomi</taxon>
        <taxon>Mammalia</taxon>
        <taxon>Eutheria</taxon>
        <taxon>Euarchontoglires</taxon>
        <taxon>Primates</taxon>
        <taxon>Haplorrhini</taxon>
        <taxon>Catarrhini</taxon>
        <taxon>Hominidae</taxon>
        <taxon>Pongo</taxon>
    </lineage>
</organism>